<organism evidence="7">
    <name type="scientific">Arabidopsis thaliana</name>
    <name type="common">Mouse-ear cress</name>
    <dbReference type="NCBI Taxonomy" id="3702"/>
    <lineage>
        <taxon>Eukaryota</taxon>
        <taxon>Viridiplantae</taxon>
        <taxon>Streptophyta</taxon>
        <taxon>Embryophyta</taxon>
        <taxon>Tracheophyta</taxon>
        <taxon>Spermatophyta</taxon>
        <taxon>Magnoliopsida</taxon>
        <taxon>eudicotyledons</taxon>
        <taxon>Gunneridae</taxon>
        <taxon>Pentapetalae</taxon>
        <taxon>rosids</taxon>
        <taxon>malvids</taxon>
        <taxon>Brassicales</taxon>
        <taxon>Brassicaceae</taxon>
        <taxon>Camelineae</taxon>
        <taxon>Arabidopsis</taxon>
    </lineage>
</organism>
<evidence type="ECO:0000255" key="1"/>
<evidence type="ECO:0000256" key="2">
    <source>
        <dbReference type="SAM" id="MobiDB-lite"/>
    </source>
</evidence>
<evidence type="ECO:0000303" key="3">
    <source>
    </source>
</evidence>
<evidence type="ECO:0000305" key="4"/>
<evidence type="ECO:0000312" key="5">
    <source>
        <dbReference type="Araport" id="AT1G23070"/>
    </source>
</evidence>
<evidence type="ECO:0000312" key="6">
    <source>
        <dbReference type="EMBL" id="AAC00612.1"/>
    </source>
</evidence>
<evidence type="ECO:0000312" key="7">
    <source>
        <dbReference type="EMBL" id="AAX23758.1"/>
    </source>
</evidence>
<reference key="1">
    <citation type="journal article" date="2000" name="Nature">
        <title>Sequence and analysis of chromosome 1 of the plant Arabidopsis thaliana.</title>
        <authorList>
            <person name="Theologis A."/>
            <person name="Ecker J.R."/>
            <person name="Palm C.J."/>
            <person name="Federspiel N.A."/>
            <person name="Kaul S."/>
            <person name="White O."/>
            <person name="Alonso J."/>
            <person name="Altafi H."/>
            <person name="Araujo R."/>
            <person name="Bowman C.L."/>
            <person name="Brooks S.Y."/>
            <person name="Buehler E."/>
            <person name="Chan A."/>
            <person name="Chao Q."/>
            <person name="Chen H."/>
            <person name="Cheuk R.F."/>
            <person name="Chin C.W."/>
            <person name="Chung M.K."/>
            <person name="Conn L."/>
            <person name="Conway A.B."/>
            <person name="Conway A.R."/>
            <person name="Creasy T.H."/>
            <person name="Dewar K."/>
            <person name="Dunn P."/>
            <person name="Etgu P."/>
            <person name="Feldblyum T.V."/>
            <person name="Feng J.-D."/>
            <person name="Fong B."/>
            <person name="Fujii C.Y."/>
            <person name="Gill J.E."/>
            <person name="Goldsmith A.D."/>
            <person name="Haas B."/>
            <person name="Hansen N.F."/>
            <person name="Hughes B."/>
            <person name="Huizar L."/>
            <person name="Hunter J.L."/>
            <person name="Jenkins J."/>
            <person name="Johnson-Hopson C."/>
            <person name="Khan S."/>
            <person name="Khaykin E."/>
            <person name="Kim C.J."/>
            <person name="Koo H.L."/>
            <person name="Kremenetskaia I."/>
            <person name="Kurtz D.B."/>
            <person name="Kwan A."/>
            <person name="Lam B."/>
            <person name="Langin-Hooper S."/>
            <person name="Lee A."/>
            <person name="Lee J.M."/>
            <person name="Lenz C.A."/>
            <person name="Li J.H."/>
            <person name="Li Y.-P."/>
            <person name="Lin X."/>
            <person name="Liu S.X."/>
            <person name="Liu Z.A."/>
            <person name="Luros J.S."/>
            <person name="Maiti R."/>
            <person name="Marziali A."/>
            <person name="Militscher J."/>
            <person name="Miranda M."/>
            <person name="Nguyen M."/>
            <person name="Nierman W.C."/>
            <person name="Osborne B.I."/>
            <person name="Pai G."/>
            <person name="Peterson J."/>
            <person name="Pham P.K."/>
            <person name="Rizzo M."/>
            <person name="Rooney T."/>
            <person name="Rowley D."/>
            <person name="Sakano H."/>
            <person name="Salzberg S.L."/>
            <person name="Schwartz J.R."/>
            <person name="Shinn P."/>
            <person name="Southwick A.M."/>
            <person name="Sun H."/>
            <person name="Tallon L.J."/>
            <person name="Tambunga G."/>
            <person name="Toriumi M.J."/>
            <person name="Town C.D."/>
            <person name="Utterback T."/>
            <person name="Van Aken S."/>
            <person name="Vaysberg M."/>
            <person name="Vysotskaia V.S."/>
            <person name="Walker M."/>
            <person name="Wu D."/>
            <person name="Yu G."/>
            <person name="Fraser C.M."/>
            <person name="Venter J.C."/>
            <person name="Davis R.W."/>
        </authorList>
    </citation>
    <scope>NUCLEOTIDE SEQUENCE [LARGE SCALE GENOMIC DNA]</scope>
    <source>
        <strain>cv. Columbia</strain>
    </source>
</reference>
<reference key="2">
    <citation type="journal article" date="2017" name="Plant J.">
        <title>Araport11: a complete reannotation of the Arabidopsis thaliana reference genome.</title>
        <authorList>
            <person name="Cheng C.Y."/>
            <person name="Krishnakumar V."/>
            <person name="Chan A.P."/>
            <person name="Thibaud-Nissen F."/>
            <person name="Schobel S."/>
            <person name="Town C.D."/>
        </authorList>
    </citation>
    <scope>GENOME REANNOTATION</scope>
    <source>
        <strain>cv. Columbia</strain>
    </source>
</reference>
<reference key="3">
    <citation type="submission" date="2005-02" db="EMBL/GenBank/DDBJ databases">
        <authorList>
            <person name="Underwood B.A."/>
            <person name="Xiao Y.-L."/>
            <person name="Moskal W.A. Jr."/>
            <person name="Monaghan E.L."/>
            <person name="Wang W."/>
            <person name="Redman J.C."/>
            <person name="Wu H.C."/>
            <person name="Utterback T."/>
            <person name="Town C.D."/>
        </authorList>
    </citation>
    <scope>NUCLEOTIDE SEQUENCE [LARGE SCALE MRNA]</scope>
    <source>
        <strain>cv. Columbia</strain>
    </source>
</reference>
<reference key="4">
    <citation type="submission" date="2005-07" db="EMBL/GenBank/DDBJ databases">
        <title>Reconstruction of cDNA sequences for hypothetical genes in Arabidopsis thaliana from 5' and 3' RACE products.</title>
        <authorList>
            <person name="Xiao Y."/>
            <person name="Underwood B.A."/>
            <person name="Moskal W."/>
            <person name="Redman J."/>
            <person name="Wang W."/>
            <person name="Monaghan E."/>
            <person name="Wu H.C."/>
            <person name="Utterback T."/>
            <person name="Town C.D."/>
        </authorList>
    </citation>
    <scope>NUCLEOTIDE SEQUENCE [LARGE SCALE MRNA]</scope>
</reference>
<reference key="5">
    <citation type="journal article" date="2010" name="PLoS ONE">
        <title>Lazarus1, a DUF300 protein, contributes to programmed cell death associated with Arabidopsis acd11 and the hypersensitive response.</title>
        <authorList>
            <person name="Malinovsky F.G."/>
            <person name="Brodersen P."/>
            <person name="Fiil B.K."/>
            <person name="McKinney L.V."/>
            <person name="Thorgrimsen S."/>
            <person name="Beck M."/>
            <person name="Nielsen H.B."/>
            <person name="Pietra S."/>
            <person name="Zipfel C."/>
            <person name="Robatzek S."/>
            <person name="Petersen M."/>
            <person name="Hofius D."/>
            <person name="Mundy J."/>
        </authorList>
    </citation>
    <scope>GENE FAMILY</scope>
</reference>
<keyword id="KW-0025">Alternative splicing</keyword>
<keyword id="KW-0472">Membrane</keyword>
<keyword id="KW-1185">Reference proteome</keyword>
<keyword id="KW-0812">Transmembrane</keyword>
<keyword id="KW-1133">Transmembrane helix</keyword>
<proteinExistence type="evidence at transcript level"/>
<dbReference type="EMBL" id="AC002311">
    <property type="protein sequence ID" value="AAC00612.1"/>
    <property type="status" value="ALT_SEQ"/>
    <property type="molecule type" value="Genomic_DNA"/>
</dbReference>
<dbReference type="EMBL" id="CP002684">
    <property type="protein sequence ID" value="AEE30330.1"/>
    <property type="molecule type" value="Genomic_DNA"/>
</dbReference>
<dbReference type="EMBL" id="AY924683">
    <property type="protein sequence ID" value="AAX23758.1"/>
    <property type="molecule type" value="mRNA"/>
</dbReference>
<dbReference type="EMBL" id="DQ132657">
    <property type="protein sequence ID" value="AAZ52687.1"/>
    <property type="molecule type" value="mRNA"/>
</dbReference>
<dbReference type="PIR" id="H86364">
    <property type="entry name" value="H86364"/>
</dbReference>
<dbReference type="RefSeq" id="NP_173720.3">
    <molecule id="Q5BPZ5-1"/>
    <property type="nucleotide sequence ID" value="NM_102155.3"/>
</dbReference>
<dbReference type="FunCoup" id="Q5BPZ5">
    <property type="interactions" value="2052"/>
</dbReference>
<dbReference type="STRING" id="3702.Q5BPZ5"/>
<dbReference type="PaxDb" id="3702-AT1G23070.1"/>
<dbReference type="ProteomicsDB" id="237072">
    <molecule id="Q5BPZ5-1"/>
</dbReference>
<dbReference type="EnsemblPlants" id="AT1G23070.1">
    <molecule id="Q5BPZ5-1"/>
    <property type="protein sequence ID" value="AT1G23070.1"/>
    <property type="gene ID" value="AT1G23070"/>
</dbReference>
<dbReference type="GeneID" id="838915"/>
<dbReference type="Gramene" id="AT1G23070.1">
    <molecule id="Q5BPZ5-1"/>
    <property type="protein sequence ID" value="AT1G23070.1"/>
    <property type="gene ID" value="AT1G23070"/>
</dbReference>
<dbReference type="KEGG" id="ath:AT1G23070"/>
<dbReference type="Araport" id="AT1G23070"/>
<dbReference type="TAIR" id="AT1G23070"/>
<dbReference type="eggNOG" id="KOG2641">
    <property type="taxonomic scope" value="Eukaryota"/>
</dbReference>
<dbReference type="HOGENOM" id="CLU_012923_0_2_1"/>
<dbReference type="InParanoid" id="Q5BPZ5"/>
<dbReference type="OMA" id="AHAFVFN"/>
<dbReference type="OrthoDB" id="5348404at2759"/>
<dbReference type="PhylomeDB" id="Q5BPZ5"/>
<dbReference type="PRO" id="PR:Q5BPZ5"/>
<dbReference type="Proteomes" id="UP000006548">
    <property type="component" value="Chromosome 1"/>
</dbReference>
<dbReference type="ExpressionAtlas" id="Q5BPZ5">
    <property type="expression patterns" value="baseline and differential"/>
</dbReference>
<dbReference type="GO" id="GO:0016020">
    <property type="term" value="C:membrane"/>
    <property type="evidence" value="ECO:0007669"/>
    <property type="project" value="UniProtKB-SubCell"/>
</dbReference>
<dbReference type="InterPro" id="IPR005178">
    <property type="entry name" value="Ostalpha/TMEM184C"/>
</dbReference>
<dbReference type="PANTHER" id="PTHR23423">
    <property type="entry name" value="ORGANIC SOLUTE TRANSPORTER-RELATED"/>
    <property type="match status" value="1"/>
</dbReference>
<dbReference type="Pfam" id="PF03619">
    <property type="entry name" value="Solute_trans_a"/>
    <property type="match status" value="1"/>
</dbReference>
<dbReference type="SMART" id="SM01417">
    <property type="entry name" value="Solute_trans_a"/>
    <property type="match status" value="1"/>
</dbReference>
<accession>Q5BPZ5</accession>
<accession>O49309</accession>
<name>LAZH2_ARATH</name>
<sequence>MGVTETSTYRDLHLPSLIIGGSFATVAICLSLYSILQHLRFYTNPAEQKWIVSVLFMVPVYATESIISLSNSKFSLPCDILRNCYEAFALYSFGSYLVACLGGERRVVEYLENESKKPLLEEGANESKKKKKKNSFWKFLCDPYVLGRELFVIEKFGLVQYMILKTFCAFLTFLLELLGVYGDGEFKWYYGYPYIVVVLNFSQMWALFCLVQFYNVTHERLKEIKPLAKFISFKAIVFATWWQGFGIALLCYYGILPKEGRFQNGLQDFLICIEMAIAAVAHLFVFPAEPYHYIPVSECGKITAETSKTEVKLEEGGLVETTETQVEASGTSIKESVQDIVIDGGQHVVKDVVLTINQAIGPVEKGVTKIQDTIHQKLLDSDGKEETEVTEEVTVETSVPPKE</sequence>
<gene>
    <name evidence="5" type="ordered locus">At1g23070</name>
    <name evidence="6" type="ORF">T26J12.15</name>
</gene>
<feature type="chain" id="PRO_0000432839" description="Protein LAZ1 homolog 2">
    <location>
        <begin position="1"/>
        <end position="403"/>
    </location>
</feature>
<feature type="transmembrane region" description="Helical; Name=1" evidence="1">
    <location>
        <begin position="16"/>
        <end position="36"/>
    </location>
</feature>
<feature type="transmembrane region" description="Helical; Name=2" evidence="1">
    <location>
        <begin position="50"/>
        <end position="70"/>
    </location>
</feature>
<feature type="transmembrane region" description="Helical; Name=3" evidence="1">
    <location>
        <begin position="162"/>
        <end position="182"/>
    </location>
</feature>
<feature type="transmembrane region" description="Helical; Name=4" evidence="1">
    <location>
        <begin position="191"/>
        <end position="211"/>
    </location>
</feature>
<feature type="transmembrane region" description="Helical; Name=5" evidence="1">
    <location>
        <begin position="236"/>
        <end position="256"/>
    </location>
</feature>
<feature type="transmembrane region" description="Helical; Name=6" evidence="1">
    <location>
        <begin position="269"/>
        <end position="289"/>
    </location>
</feature>
<feature type="region of interest" description="Disordered" evidence="2">
    <location>
        <begin position="381"/>
        <end position="403"/>
    </location>
</feature>
<protein>
    <recommendedName>
        <fullName evidence="3">Protein LAZ1 homolog 2</fullName>
    </recommendedName>
    <alternativeName>
        <fullName evidence="3">Lazarus1 homolog 2</fullName>
    </alternativeName>
</protein>
<comment type="subcellular location">
    <subcellularLocation>
        <location evidence="1">Membrane</location>
        <topology evidence="1">Multi-pass membrane protein</topology>
    </subcellularLocation>
</comment>
<comment type="alternative products">
    <event type="alternative splicing"/>
    <isoform>
        <id>Q5BPZ5-1</id>
        <name>1</name>
        <sequence type="displayed"/>
    </isoform>
    <text evidence="4">A number of isoforms are produced. According to EST sequences.</text>
</comment>
<comment type="similarity">
    <text evidence="4">Belongs to the TMEM184 family.</text>
</comment>
<comment type="sequence caution" evidence="4">
    <conflict type="erroneous gene model prediction">
        <sequence resource="EMBL-CDS" id="AAC00612"/>
    </conflict>
</comment>